<protein>
    <recommendedName>
        <fullName evidence="1">Apolipoprotein N-acyltransferase</fullName>
        <shortName evidence="1">ALP N-acyltransferase</shortName>
        <ecNumber evidence="1">2.3.1.269</ecNumber>
    </recommendedName>
</protein>
<sequence length="547" mass="58351">MSPAGKGPAWRQPAILAAAGAAHALSFAPDPLPAWSLAPVQVIALAVAAHASLQAPSARRALARGWLFAMFSFSLGLYWLYVSMHDYGGLAAPLAAAGVLALSAFLALFPGLACAAARWLCPPHWDASPPARARRTLYTAATWAACWAALEWLRAVVLTGFPWLNIGYAHVDSPLAGWAPLLGVHGMALLAAFAAAALAGLWQSASGRIDSRQALAAGVALLLAGAGWLLGQFSWSRPEGKPLHLRLVQGNVEQSQKFDPALLETGLRRHLELASLPPRPGEPKPDLIILPETVLPVFQDQLPASVWDAWIEVARRADTRIAMGVPLHTQPDGATGHRYTNSVIGFDASTPVEQLRTGTTAMRYDKQHLVPWGEYVPPGFRWFVDMLDIPLGDFDRGAARQPSFDIAGQRIAFNICYEDLFGPELLPALQDGPDGRPGATIMANVSNLGWFGNTWALRQHLQIGRLRTMETARPMVAATNTGITAAIDARGRVAAALPAGRAGVLPVAVQGMTGLTPYARFGDKPALALIGLLLIAAAARGRRPRQP</sequence>
<organism>
    <name type="scientific">Bordetella bronchiseptica (strain ATCC BAA-588 / NCTC 13252 / RB50)</name>
    <name type="common">Alcaligenes bronchisepticus</name>
    <dbReference type="NCBI Taxonomy" id="257310"/>
    <lineage>
        <taxon>Bacteria</taxon>
        <taxon>Pseudomonadati</taxon>
        <taxon>Pseudomonadota</taxon>
        <taxon>Betaproteobacteria</taxon>
        <taxon>Burkholderiales</taxon>
        <taxon>Alcaligenaceae</taxon>
        <taxon>Bordetella</taxon>
    </lineage>
</organism>
<accession>Q7WMN7</accession>
<gene>
    <name evidence="1" type="primary">lnt</name>
    <name type="ordered locus">BB1353</name>
</gene>
<keyword id="KW-0012">Acyltransferase</keyword>
<keyword id="KW-0997">Cell inner membrane</keyword>
<keyword id="KW-1003">Cell membrane</keyword>
<keyword id="KW-0472">Membrane</keyword>
<keyword id="KW-0808">Transferase</keyword>
<keyword id="KW-0812">Transmembrane</keyword>
<keyword id="KW-1133">Transmembrane helix</keyword>
<dbReference type="EC" id="2.3.1.269" evidence="1"/>
<dbReference type="EMBL" id="BX640441">
    <property type="protein sequence ID" value="CAE31851.1"/>
    <property type="molecule type" value="Genomic_DNA"/>
</dbReference>
<dbReference type="RefSeq" id="WP_010926139.1">
    <property type="nucleotide sequence ID" value="NC_002927.3"/>
</dbReference>
<dbReference type="SMR" id="Q7WMN7"/>
<dbReference type="KEGG" id="bbr:BB1353"/>
<dbReference type="eggNOG" id="COG0815">
    <property type="taxonomic scope" value="Bacteria"/>
</dbReference>
<dbReference type="HOGENOM" id="CLU_019563_3_0_4"/>
<dbReference type="UniPathway" id="UPA00666"/>
<dbReference type="Proteomes" id="UP000001027">
    <property type="component" value="Chromosome"/>
</dbReference>
<dbReference type="GO" id="GO:0005886">
    <property type="term" value="C:plasma membrane"/>
    <property type="evidence" value="ECO:0007669"/>
    <property type="project" value="UniProtKB-SubCell"/>
</dbReference>
<dbReference type="GO" id="GO:0016410">
    <property type="term" value="F:N-acyltransferase activity"/>
    <property type="evidence" value="ECO:0007669"/>
    <property type="project" value="UniProtKB-UniRule"/>
</dbReference>
<dbReference type="GO" id="GO:0042158">
    <property type="term" value="P:lipoprotein biosynthetic process"/>
    <property type="evidence" value="ECO:0007669"/>
    <property type="project" value="UniProtKB-UniRule"/>
</dbReference>
<dbReference type="CDD" id="cd07571">
    <property type="entry name" value="ALP_N-acyl_transferase"/>
    <property type="match status" value="1"/>
</dbReference>
<dbReference type="Gene3D" id="3.60.110.10">
    <property type="entry name" value="Carbon-nitrogen hydrolase"/>
    <property type="match status" value="1"/>
</dbReference>
<dbReference type="HAMAP" id="MF_01148">
    <property type="entry name" value="Lnt"/>
    <property type="match status" value="1"/>
</dbReference>
<dbReference type="InterPro" id="IPR004563">
    <property type="entry name" value="Apolipo_AcylTrfase"/>
</dbReference>
<dbReference type="InterPro" id="IPR003010">
    <property type="entry name" value="C-N_Hydrolase"/>
</dbReference>
<dbReference type="InterPro" id="IPR036526">
    <property type="entry name" value="C-N_Hydrolase_sf"/>
</dbReference>
<dbReference type="InterPro" id="IPR045378">
    <property type="entry name" value="LNT_N"/>
</dbReference>
<dbReference type="NCBIfam" id="TIGR00546">
    <property type="entry name" value="lnt"/>
    <property type="match status" value="1"/>
</dbReference>
<dbReference type="PANTHER" id="PTHR38686">
    <property type="entry name" value="APOLIPOPROTEIN N-ACYLTRANSFERASE"/>
    <property type="match status" value="1"/>
</dbReference>
<dbReference type="PANTHER" id="PTHR38686:SF1">
    <property type="entry name" value="APOLIPOPROTEIN N-ACYLTRANSFERASE"/>
    <property type="match status" value="1"/>
</dbReference>
<dbReference type="Pfam" id="PF00795">
    <property type="entry name" value="CN_hydrolase"/>
    <property type="match status" value="1"/>
</dbReference>
<dbReference type="Pfam" id="PF20154">
    <property type="entry name" value="LNT_N"/>
    <property type="match status" value="1"/>
</dbReference>
<dbReference type="SUPFAM" id="SSF56317">
    <property type="entry name" value="Carbon-nitrogen hydrolase"/>
    <property type="match status" value="1"/>
</dbReference>
<dbReference type="PROSITE" id="PS50263">
    <property type="entry name" value="CN_HYDROLASE"/>
    <property type="match status" value="1"/>
</dbReference>
<evidence type="ECO:0000255" key="1">
    <source>
        <dbReference type="HAMAP-Rule" id="MF_01148"/>
    </source>
</evidence>
<proteinExistence type="inferred from homology"/>
<comment type="function">
    <text evidence="1">Catalyzes the phospholipid dependent N-acylation of the N-terminal cysteine of apolipoprotein, the last step in lipoprotein maturation.</text>
</comment>
<comment type="catalytic activity">
    <reaction evidence="1">
        <text>N-terminal S-1,2-diacyl-sn-glyceryl-L-cysteinyl-[lipoprotein] + a glycerophospholipid = N-acyl-S-1,2-diacyl-sn-glyceryl-L-cysteinyl-[lipoprotein] + a 2-acyl-sn-glycero-3-phospholipid + H(+)</text>
        <dbReference type="Rhea" id="RHEA:48228"/>
        <dbReference type="Rhea" id="RHEA-COMP:14681"/>
        <dbReference type="Rhea" id="RHEA-COMP:14684"/>
        <dbReference type="ChEBI" id="CHEBI:15378"/>
        <dbReference type="ChEBI" id="CHEBI:136912"/>
        <dbReference type="ChEBI" id="CHEBI:140656"/>
        <dbReference type="ChEBI" id="CHEBI:140657"/>
        <dbReference type="ChEBI" id="CHEBI:140660"/>
        <dbReference type="EC" id="2.3.1.269"/>
    </reaction>
</comment>
<comment type="pathway">
    <text evidence="1">Protein modification; lipoprotein biosynthesis (N-acyl transfer).</text>
</comment>
<comment type="subcellular location">
    <subcellularLocation>
        <location evidence="1">Cell inner membrane</location>
        <topology evidence="1">Multi-pass membrane protein</topology>
    </subcellularLocation>
</comment>
<comment type="similarity">
    <text evidence="1">Belongs to the CN hydrolase family. Apolipoprotein N-acyltransferase subfamily.</text>
</comment>
<name>LNT_BORBR</name>
<reference key="1">
    <citation type="journal article" date="2003" name="Nat. Genet.">
        <title>Comparative analysis of the genome sequences of Bordetella pertussis, Bordetella parapertussis and Bordetella bronchiseptica.</title>
        <authorList>
            <person name="Parkhill J."/>
            <person name="Sebaihia M."/>
            <person name="Preston A."/>
            <person name="Murphy L.D."/>
            <person name="Thomson N.R."/>
            <person name="Harris D.E."/>
            <person name="Holden M.T.G."/>
            <person name="Churcher C.M."/>
            <person name="Bentley S.D."/>
            <person name="Mungall K.L."/>
            <person name="Cerdeno-Tarraga A.-M."/>
            <person name="Temple L."/>
            <person name="James K.D."/>
            <person name="Harris B."/>
            <person name="Quail M.A."/>
            <person name="Achtman M."/>
            <person name="Atkin R."/>
            <person name="Baker S."/>
            <person name="Basham D."/>
            <person name="Bason N."/>
            <person name="Cherevach I."/>
            <person name="Chillingworth T."/>
            <person name="Collins M."/>
            <person name="Cronin A."/>
            <person name="Davis P."/>
            <person name="Doggett J."/>
            <person name="Feltwell T."/>
            <person name="Goble A."/>
            <person name="Hamlin N."/>
            <person name="Hauser H."/>
            <person name="Holroyd S."/>
            <person name="Jagels K."/>
            <person name="Leather S."/>
            <person name="Moule S."/>
            <person name="Norberczak H."/>
            <person name="O'Neil S."/>
            <person name="Ormond D."/>
            <person name="Price C."/>
            <person name="Rabbinowitsch E."/>
            <person name="Rutter S."/>
            <person name="Sanders M."/>
            <person name="Saunders D."/>
            <person name="Seeger K."/>
            <person name="Sharp S."/>
            <person name="Simmonds M."/>
            <person name="Skelton J."/>
            <person name="Squares R."/>
            <person name="Squares S."/>
            <person name="Stevens K."/>
            <person name="Unwin L."/>
            <person name="Whitehead S."/>
            <person name="Barrell B.G."/>
            <person name="Maskell D.J."/>
        </authorList>
    </citation>
    <scope>NUCLEOTIDE SEQUENCE [LARGE SCALE GENOMIC DNA]</scope>
    <source>
        <strain>ATCC BAA-588 / NCTC 13252 / RB50</strain>
    </source>
</reference>
<feature type="chain" id="PRO_0000178045" description="Apolipoprotein N-acyltransferase">
    <location>
        <begin position="1"/>
        <end position="547"/>
    </location>
</feature>
<feature type="transmembrane region" description="Helical" evidence="1">
    <location>
        <begin position="31"/>
        <end position="51"/>
    </location>
</feature>
<feature type="transmembrane region" description="Helical" evidence="1">
    <location>
        <begin position="65"/>
        <end position="85"/>
    </location>
</feature>
<feature type="transmembrane region" description="Helical" evidence="1">
    <location>
        <begin position="89"/>
        <end position="109"/>
    </location>
</feature>
<feature type="transmembrane region" description="Helical" evidence="1">
    <location>
        <begin position="144"/>
        <end position="164"/>
    </location>
</feature>
<feature type="transmembrane region" description="Helical" evidence="1">
    <location>
        <begin position="181"/>
        <end position="201"/>
    </location>
</feature>
<feature type="transmembrane region" description="Helical" evidence="1">
    <location>
        <begin position="215"/>
        <end position="235"/>
    </location>
</feature>
<feature type="domain" description="CN hydrolase" evidence="1">
    <location>
        <begin position="248"/>
        <end position="511"/>
    </location>
</feature>
<feature type="active site" description="Proton acceptor" evidence="1">
    <location>
        <position position="292"/>
    </location>
</feature>
<feature type="active site" evidence="1">
    <location>
        <position position="366"/>
    </location>
</feature>
<feature type="active site" description="Nucleophile" evidence="1">
    <location>
        <position position="416"/>
    </location>
</feature>